<reference key="1">
    <citation type="submission" date="2007-03" db="EMBL/GenBank/DDBJ databases">
        <authorList>
            <person name="Heidelberg J."/>
        </authorList>
    </citation>
    <scope>NUCLEOTIDE SEQUENCE [LARGE SCALE GENOMIC DNA]</scope>
    <source>
        <strain>ATCC 39541 / Classical Ogawa 395 / O395</strain>
    </source>
</reference>
<reference key="2">
    <citation type="journal article" date="2008" name="PLoS ONE">
        <title>A recalibrated molecular clock and independent origins for the cholera pandemic clones.</title>
        <authorList>
            <person name="Feng L."/>
            <person name="Reeves P.R."/>
            <person name="Lan R."/>
            <person name="Ren Y."/>
            <person name="Gao C."/>
            <person name="Zhou Z."/>
            <person name="Ren Y."/>
            <person name="Cheng J."/>
            <person name="Wang W."/>
            <person name="Wang J."/>
            <person name="Qian W."/>
            <person name="Li D."/>
            <person name="Wang L."/>
        </authorList>
    </citation>
    <scope>NUCLEOTIDE SEQUENCE [LARGE SCALE GENOMIC DNA]</scope>
    <source>
        <strain>ATCC 39541 / Classical Ogawa 395 / O395</strain>
    </source>
</reference>
<keyword id="KW-0233">DNA recombination</keyword>
<keyword id="KW-0238">DNA-binding</keyword>
<keyword id="KW-0804">Transcription</keyword>
<keyword id="KW-0805">Transcription regulation</keyword>
<keyword id="KW-0810">Translation regulation</keyword>
<dbReference type="EMBL" id="CP000627">
    <property type="protein sequence ID" value="ABQ20270.1"/>
    <property type="molecule type" value="Genomic_DNA"/>
</dbReference>
<dbReference type="EMBL" id="CP001235">
    <property type="protein sequence ID" value="ACP10022.1"/>
    <property type="molecule type" value="Genomic_DNA"/>
</dbReference>
<dbReference type="RefSeq" id="WP_000167341.1">
    <property type="nucleotide sequence ID" value="NZ_JAACZH010000001.1"/>
</dbReference>
<dbReference type="SMR" id="A5F6Y4"/>
<dbReference type="GeneID" id="94013431"/>
<dbReference type="KEGG" id="vco:VC0395_A1504"/>
<dbReference type="KEGG" id="vcr:VC395_2029"/>
<dbReference type="PATRIC" id="fig|345073.21.peg.1963"/>
<dbReference type="eggNOG" id="COG0776">
    <property type="taxonomic scope" value="Bacteria"/>
</dbReference>
<dbReference type="HOGENOM" id="CLU_105066_2_0_6"/>
<dbReference type="OrthoDB" id="9804203at2"/>
<dbReference type="Proteomes" id="UP000000249">
    <property type="component" value="Chromosome 2"/>
</dbReference>
<dbReference type="GO" id="GO:0005694">
    <property type="term" value="C:chromosome"/>
    <property type="evidence" value="ECO:0007669"/>
    <property type="project" value="InterPro"/>
</dbReference>
<dbReference type="GO" id="GO:0005829">
    <property type="term" value="C:cytosol"/>
    <property type="evidence" value="ECO:0007669"/>
    <property type="project" value="TreeGrafter"/>
</dbReference>
<dbReference type="GO" id="GO:0003677">
    <property type="term" value="F:DNA binding"/>
    <property type="evidence" value="ECO:0007669"/>
    <property type="project" value="UniProtKB-UniRule"/>
</dbReference>
<dbReference type="GO" id="GO:0030527">
    <property type="term" value="F:structural constituent of chromatin"/>
    <property type="evidence" value="ECO:0007669"/>
    <property type="project" value="InterPro"/>
</dbReference>
<dbReference type="GO" id="GO:0006310">
    <property type="term" value="P:DNA recombination"/>
    <property type="evidence" value="ECO:0007669"/>
    <property type="project" value="UniProtKB-UniRule"/>
</dbReference>
<dbReference type="GO" id="GO:0006355">
    <property type="term" value="P:regulation of DNA-templated transcription"/>
    <property type="evidence" value="ECO:0007669"/>
    <property type="project" value="UniProtKB-UniRule"/>
</dbReference>
<dbReference type="GO" id="GO:0006417">
    <property type="term" value="P:regulation of translation"/>
    <property type="evidence" value="ECO:0007669"/>
    <property type="project" value="UniProtKB-UniRule"/>
</dbReference>
<dbReference type="CDD" id="cd13836">
    <property type="entry name" value="IHF_B"/>
    <property type="match status" value="1"/>
</dbReference>
<dbReference type="FunFam" id="4.10.520.10:FF:000003">
    <property type="entry name" value="Integration host factor subunit beta"/>
    <property type="match status" value="1"/>
</dbReference>
<dbReference type="Gene3D" id="4.10.520.10">
    <property type="entry name" value="IHF-like DNA-binding proteins"/>
    <property type="match status" value="1"/>
</dbReference>
<dbReference type="HAMAP" id="MF_00381">
    <property type="entry name" value="IHF_beta"/>
    <property type="match status" value="1"/>
</dbReference>
<dbReference type="InterPro" id="IPR000119">
    <property type="entry name" value="Hist_DNA-bd"/>
</dbReference>
<dbReference type="InterPro" id="IPR020816">
    <property type="entry name" value="Histone-like_DNA-bd_CS"/>
</dbReference>
<dbReference type="InterPro" id="IPR010992">
    <property type="entry name" value="IHF-like_DNA-bd_dom_sf"/>
</dbReference>
<dbReference type="InterPro" id="IPR005685">
    <property type="entry name" value="IHF_beta"/>
</dbReference>
<dbReference type="NCBIfam" id="TIGR00988">
    <property type="entry name" value="hip"/>
    <property type="match status" value="1"/>
</dbReference>
<dbReference type="NCBIfam" id="NF001222">
    <property type="entry name" value="PRK00199.1"/>
    <property type="match status" value="1"/>
</dbReference>
<dbReference type="PANTHER" id="PTHR33175">
    <property type="entry name" value="DNA-BINDING PROTEIN HU"/>
    <property type="match status" value="1"/>
</dbReference>
<dbReference type="PANTHER" id="PTHR33175:SF5">
    <property type="entry name" value="INTEGRATION HOST FACTOR SUBUNIT BETA"/>
    <property type="match status" value="1"/>
</dbReference>
<dbReference type="Pfam" id="PF00216">
    <property type="entry name" value="Bac_DNA_binding"/>
    <property type="match status" value="1"/>
</dbReference>
<dbReference type="PRINTS" id="PR01727">
    <property type="entry name" value="DNABINDINGHU"/>
</dbReference>
<dbReference type="SMART" id="SM00411">
    <property type="entry name" value="BHL"/>
    <property type="match status" value="1"/>
</dbReference>
<dbReference type="SUPFAM" id="SSF47729">
    <property type="entry name" value="IHF-like DNA-binding proteins"/>
    <property type="match status" value="1"/>
</dbReference>
<dbReference type="PROSITE" id="PS00045">
    <property type="entry name" value="HISTONE_LIKE"/>
    <property type="match status" value="1"/>
</dbReference>
<protein>
    <recommendedName>
        <fullName evidence="1">Integration host factor subunit beta</fullName>
        <shortName evidence="1">IHF-beta</shortName>
    </recommendedName>
</protein>
<gene>
    <name evidence="1" type="primary">ihfB</name>
    <name evidence="1" type="synonym">himD</name>
    <name type="synonym">hipB</name>
    <name type="ordered locus">VC0395_A1504</name>
    <name type="ordered locus">VC395_2029</name>
</gene>
<comment type="function">
    <text evidence="1">This protein is one of the two subunits of integration host factor, a specific DNA-binding protein that functions in genetic recombination as well as in transcriptional and translational control.</text>
</comment>
<comment type="subunit">
    <text evidence="1">Heterodimer of an alpha and a beta chain.</text>
</comment>
<comment type="similarity">
    <text evidence="1">Belongs to the bacterial histone-like protein family.</text>
</comment>
<accession>A5F6Y4</accession>
<accession>C3M1W7</accession>
<feature type="chain" id="PRO_1000072178" description="Integration host factor subunit beta">
    <location>
        <begin position="1"/>
        <end position="92"/>
    </location>
</feature>
<proteinExistence type="inferred from homology"/>
<name>IHFB_VIBC3</name>
<sequence length="92" mass="10546">MTKSELIERLCAEQTHLSAKEIEDAVKNILEHMASTLEAGERIEIRGFGSFSLHYREPRVGRNPKTGDKVELEGKYVPHFKPGKELRERVNL</sequence>
<organism>
    <name type="scientific">Vibrio cholerae serotype O1 (strain ATCC 39541 / Classical Ogawa 395 / O395)</name>
    <dbReference type="NCBI Taxonomy" id="345073"/>
    <lineage>
        <taxon>Bacteria</taxon>
        <taxon>Pseudomonadati</taxon>
        <taxon>Pseudomonadota</taxon>
        <taxon>Gammaproteobacteria</taxon>
        <taxon>Vibrionales</taxon>
        <taxon>Vibrionaceae</taxon>
        <taxon>Vibrio</taxon>
    </lineage>
</organism>
<evidence type="ECO:0000255" key="1">
    <source>
        <dbReference type="HAMAP-Rule" id="MF_00381"/>
    </source>
</evidence>